<protein>
    <recommendedName>
        <fullName>Translocation protein sec66</fullName>
    </recommendedName>
</protein>
<name>SEC66_SCHPO</name>
<keyword id="KW-0256">Endoplasmic reticulum</keyword>
<keyword id="KW-0472">Membrane</keyword>
<keyword id="KW-0597">Phosphoprotein</keyword>
<keyword id="KW-0653">Protein transport</keyword>
<keyword id="KW-1185">Reference proteome</keyword>
<keyword id="KW-0735">Signal-anchor</keyword>
<keyword id="KW-0812">Transmembrane</keyword>
<keyword id="KW-1133">Transmembrane helix</keyword>
<keyword id="KW-0813">Transport</keyword>
<dbReference type="EMBL" id="CU329671">
    <property type="protein sequence ID" value="CAB52623.1"/>
    <property type="molecule type" value="Genomic_DNA"/>
</dbReference>
<dbReference type="PIR" id="T40448">
    <property type="entry name" value="T40448"/>
</dbReference>
<dbReference type="RefSeq" id="NP_595471.1">
    <property type="nucleotide sequence ID" value="NM_001021381.2"/>
</dbReference>
<dbReference type="SMR" id="Q9UUA4"/>
<dbReference type="BioGRID" id="277558">
    <property type="interactions" value="2"/>
</dbReference>
<dbReference type="FunCoup" id="Q9UUA4">
    <property type="interactions" value="58"/>
</dbReference>
<dbReference type="STRING" id="284812.Q9UUA4"/>
<dbReference type="iPTMnet" id="Q9UUA4"/>
<dbReference type="PaxDb" id="4896-SPBC409.21.1"/>
<dbReference type="EnsemblFungi" id="SPBC409.21.1">
    <property type="protein sequence ID" value="SPBC409.21.1:pep"/>
    <property type="gene ID" value="SPBC409.21"/>
</dbReference>
<dbReference type="GeneID" id="2541043"/>
<dbReference type="KEGG" id="spo:2541043"/>
<dbReference type="PomBase" id="SPBC409.21">
    <property type="gene designation" value="sec66"/>
</dbReference>
<dbReference type="VEuPathDB" id="FungiDB:SPBC409.21"/>
<dbReference type="eggNOG" id="KOG4699">
    <property type="taxonomic scope" value="Eukaryota"/>
</dbReference>
<dbReference type="HOGENOM" id="CLU_066294_1_1_1"/>
<dbReference type="InParanoid" id="Q9UUA4"/>
<dbReference type="OMA" id="DYWQRYQ"/>
<dbReference type="PhylomeDB" id="Q9UUA4"/>
<dbReference type="PRO" id="PR:Q9UUA4"/>
<dbReference type="Proteomes" id="UP000002485">
    <property type="component" value="Chromosome II"/>
</dbReference>
<dbReference type="GO" id="GO:0005783">
    <property type="term" value="C:endoplasmic reticulum"/>
    <property type="evidence" value="ECO:0007005"/>
    <property type="project" value="PomBase"/>
</dbReference>
<dbReference type="GO" id="GO:0031207">
    <property type="term" value="C:Sec62/Sec63 complex"/>
    <property type="evidence" value="ECO:0000318"/>
    <property type="project" value="GO_Central"/>
</dbReference>
<dbReference type="GO" id="GO:0031204">
    <property type="term" value="P:post-translational protein targeting to membrane, translocation"/>
    <property type="evidence" value="ECO:0000318"/>
    <property type="project" value="GO_Central"/>
</dbReference>
<dbReference type="InterPro" id="IPR018624">
    <property type="entry name" value="Sec66"/>
</dbReference>
<dbReference type="PANTHER" id="PTHR28229">
    <property type="entry name" value="TRANSLOCATION PROTEIN SEC66"/>
    <property type="match status" value="1"/>
</dbReference>
<dbReference type="PANTHER" id="PTHR28229:SF1">
    <property type="entry name" value="TRANSLOCATION PROTEIN SEC66"/>
    <property type="match status" value="1"/>
</dbReference>
<dbReference type="Pfam" id="PF09802">
    <property type="entry name" value="Sec66"/>
    <property type="match status" value="1"/>
</dbReference>
<comment type="function">
    <text evidence="1">Acts as a component of the Sec62/63 complex which is involved in SRP-independent post-translational translocation across the endoplasmic reticulum (ER) and functions together with the Sec61 complex and bip1 in a channel-forming translocon complex. A cycle of assembly and disassembly of Sec62/63 complex from sec61 may govern the activity of the translocon. sec66 is required to attach or retain sec72 in the sec63 complex (By similarity).</text>
</comment>
<comment type="subunit">
    <text evidence="1">Component of the heterotetrameric Sec62/63complex composed of sec62, sec63, sec66 and sec72. The Sec62/63 complex associates with the Sec61 complex to form the Sec complex (By similarity).</text>
</comment>
<comment type="subcellular location">
    <subcellularLocation>
        <location evidence="4">Endoplasmic reticulum membrane</location>
        <topology evidence="4">Single-pass type II membrane protein</topology>
    </subcellularLocation>
</comment>
<feature type="chain" id="PRO_0000311763" description="Translocation protein sec66">
    <location>
        <begin position="1"/>
        <end position="192"/>
    </location>
</feature>
<feature type="topological domain" description="Lumenal" evidence="1">
    <location>
        <begin position="1"/>
        <end position="3"/>
    </location>
</feature>
<feature type="transmembrane region" description="Helical; Signal-anchor for type II membrane protein" evidence="2">
    <location>
        <begin position="4"/>
        <end position="21"/>
    </location>
</feature>
<feature type="topological domain" description="Cytoplasmic" evidence="1">
    <location>
        <begin position="22"/>
        <end position="192"/>
    </location>
</feature>
<feature type="modified residue" description="Phosphoserine" evidence="3">
    <location>
        <position position="162"/>
    </location>
</feature>
<reference key="1">
    <citation type="journal article" date="2002" name="Nature">
        <title>The genome sequence of Schizosaccharomyces pombe.</title>
        <authorList>
            <person name="Wood V."/>
            <person name="Gwilliam R."/>
            <person name="Rajandream M.A."/>
            <person name="Lyne M.H."/>
            <person name="Lyne R."/>
            <person name="Stewart A."/>
            <person name="Sgouros J.G."/>
            <person name="Peat N."/>
            <person name="Hayles J."/>
            <person name="Baker S.G."/>
            <person name="Basham D."/>
            <person name="Bowman S."/>
            <person name="Brooks K."/>
            <person name="Brown D."/>
            <person name="Brown S."/>
            <person name="Chillingworth T."/>
            <person name="Churcher C.M."/>
            <person name="Collins M."/>
            <person name="Connor R."/>
            <person name="Cronin A."/>
            <person name="Davis P."/>
            <person name="Feltwell T."/>
            <person name="Fraser A."/>
            <person name="Gentles S."/>
            <person name="Goble A."/>
            <person name="Hamlin N."/>
            <person name="Harris D.E."/>
            <person name="Hidalgo J."/>
            <person name="Hodgson G."/>
            <person name="Holroyd S."/>
            <person name="Hornsby T."/>
            <person name="Howarth S."/>
            <person name="Huckle E.J."/>
            <person name="Hunt S."/>
            <person name="Jagels K."/>
            <person name="James K.D."/>
            <person name="Jones L."/>
            <person name="Jones M."/>
            <person name="Leather S."/>
            <person name="McDonald S."/>
            <person name="McLean J."/>
            <person name="Mooney P."/>
            <person name="Moule S."/>
            <person name="Mungall K.L."/>
            <person name="Murphy L.D."/>
            <person name="Niblett D."/>
            <person name="Odell C."/>
            <person name="Oliver K."/>
            <person name="O'Neil S."/>
            <person name="Pearson D."/>
            <person name="Quail M.A."/>
            <person name="Rabbinowitsch E."/>
            <person name="Rutherford K.M."/>
            <person name="Rutter S."/>
            <person name="Saunders D."/>
            <person name="Seeger K."/>
            <person name="Sharp S."/>
            <person name="Skelton J."/>
            <person name="Simmonds M.N."/>
            <person name="Squares R."/>
            <person name="Squares S."/>
            <person name="Stevens K."/>
            <person name="Taylor K."/>
            <person name="Taylor R.G."/>
            <person name="Tivey A."/>
            <person name="Walsh S.V."/>
            <person name="Warren T."/>
            <person name="Whitehead S."/>
            <person name="Woodward J.R."/>
            <person name="Volckaert G."/>
            <person name="Aert R."/>
            <person name="Robben J."/>
            <person name="Grymonprez B."/>
            <person name="Weltjens I."/>
            <person name="Vanstreels E."/>
            <person name="Rieger M."/>
            <person name="Schaefer M."/>
            <person name="Mueller-Auer S."/>
            <person name="Gabel C."/>
            <person name="Fuchs M."/>
            <person name="Duesterhoeft A."/>
            <person name="Fritzc C."/>
            <person name="Holzer E."/>
            <person name="Moestl D."/>
            <person name="Hilbert H."/>
            <person name="Borzym K."/>
            <person name="Langer I."/>
            <person name="Beck A."/>
            <person name="Lehrach H."/>
            <person name="Reinhardt R."/>
            <person name="Pohl T.M."/>
            <person name="Eger P."/>
            <person name="Zimmermann W."/>
            <person name="Wedler H."/>
            <person name="Wambutt R."/>
            <person name="Purnelle B."/>
            <person name="Goffeau A."/>
            <person name="Cadieu E."/>
            <person name="Dreano S."/>
            <person name="Gloux S."/>
            <person name="Lelaure V."/>
            <person name="Mottier S."/>
            <person name="Galibert F."/>
            <person name="Aves S.J."/>
            <person name="Xiang Z."/>
            <person name="Hunt C."/>
            <person name="Moore K."/>
            <person name="Hurst S.M."/>
            <person name="Lucas M."/>
            <person name="Rochet M."/>
            <person name="Gaillardin C."/>
            <person name="Tallada V.A."/>
            <person name="Garzon A."/>
            <person name="Thode G."/>
            <person name="Daga R.R."/>
            <person name="Cruzado L."/>
            <person name="Jimenez J."/>
            <person name="Sanchez M."/>
            <person name="del Rey F."/>
            <person name="Benito J."/>
            <person name="Dominguez A."/>
            <person name="Revuelta J.L."/>
            <person name="Moreno S."/>
            <person name="Armstrong J."/>
            <person name="Forsburg S.L."/>
            <person name="Cerutti L."/>
            <person name="Lowe T."/>
            <person name="McCombie W.R."/>
            <person name="Paulsen I."/>
            <person name="Potashkin J."/>
            <person name="Shpakovski G.V."/>
            <person name="Ussery D."/>
            <person name="Barrell B.G."/>
            <person name="Nurse P."/>
        </authorList>
    </citation>
    <scope>NUCLEOTIDE SEQUENCE [LARGE SCALE GENOMIC DNA]</scope>
    <source>
        <strain>972 / ATCC 24843</strain>
    </source>
</reference>
<reference key="2">
    <citation type="journal article" date="2006" name="Nat. Biotechnol.">
        <title>ORFeome cloning and global analysis of protein localization in the fission yeast Schizosaccharomyces pombe.</title>
        <authorList>
            <person name="Matsuyama A."/>
            <person name="Arai R."/>
            <person name="Yashiroda Y."/>
            <person name="Shirai A."/>
            <person name="Kamata A."/>
            <person name="Sekido S."/>
            <person name="Kobayashi Y."/>
            <person name="Hashimoto A."/>
            <person name="Hamamoto M."/>
            <person name="Hiraoka Y."/>
            <person name="Horinouchi S."/>
            <person name="Yoshida M."/>
        </authorList>
    </citation>
    <scope>SUBCELLULAR LOCATION [LARGE SCALE ANALYSIS]</scope>
</reference>
<reference key="3">
    <citation type="journal article" date="2008" name="J. Proteome Res.">
        <title>Phosphoproteome analysis of fission yeast.</title>
        <authorList>
            <person name="Wilson-Grady J.T."/>
            <person name="Villen J."/>
            <person name="Gygi S.P."/>
        </authorList>
    </citation>
    <scope>PHOSPHORYLATION [LARGE SCALE ANALYSIS] AT SER-162</scope>
    <scope>IDENTIFICATION BY MASS SPECTROMETRY</scope>
</reference>
<organism>
    <name type="scientific">Schizosaccharomyces pombe (strain 972 / ATCC 24843)</name>
    <name type="common">Fission yeast</name>
    <dbReference type="NCBI Taxonomy" id="284812"/>
    <lineage>
        <taxon>Eukaryota</taxon>
        <taxon>Fungi</taxon>
        <taxon>Dikarya</taxon>
        <taxon>Ascomycota</taxon>
        <taxon>Taphrinomycotina</taxon>
        <taxon>Schizosaccharomycetes</taxon>
        <taxon>Schizosaccharomycetales</taxon>
        <taxon>Schizosaccharomycetaceae</taxon>
        <taxon>Schizosaccharomyces</taxon>
    </lineage>
</organism>
<evidence type="ECO:0000250" key="1"/>
<evidence type="ECO:0000255" key="2"/>
<evidence type="ECO:0000269" key="3">
    <source>
    </source>
</evidence>
<evidence type="ECO:0000305" key="4"/>
<accession>Q9UUA4</accession>
<sequence length="192" mass="22136">MVSIYVPLIYITILMGSMYGVSRFVRKSKNQESKPVSEEWFGENYSRNIFFSLLQQNPPAEDTLLKAALVLRATEGLRRLMKLKVSRMALNNLLNRGGVGDELIRKFGRLEKETELELMDIAKTANSLQPGWNQFIFQTCNEIIENEKIHSIIDNIPKDIDSISQRWQTEKILYEAADEELRIQAQKELGVL</sequence>
<proteinExistence type="evidence at protein level"/>
<gene>
    <name type="primary">sec66</name>
    <name type="ORF">SPBC409.21</name>
</gene>